<proteinExistence type="inferred from homology"/>
<comment type="function">
    <text evidence="1">Peptide chain release factor 1 directs the termination of translation in response to the peptide chain termination codons UAG and UAA.</text>
</comment>
<comment type="subcellular location">
    <subcellularLocation>
        <location evidence="1">Cytoplasm</location>
    </subcellularLocation>
</comment>
<comment type="PTM">
    <text evidence="1">Methylated by PrmC. Methylation increases the termination efficiency of RF1.</text>
</comment>
<comment type="similarity">
    <text evidence="1">Belongs to the prokaryotic/mitochondrial release factor family.</text>
</comment>
<protein>
    <recommendedName>
        <fullName evidence="1">Peptide chain release factor 1</fullName>
        <shortName evidence="1">RF-1</shortName>
    </recommendedName>
</protein>
<evidence type="ECO:0000255" key="1">
    <source>
        <dbReference type="HAMAP-Rule" id="MF_00093"/>
    </source>
</evidence>
<dbReference type="EMBL" id="CP000020">
    <property type="protein sequence ID" value="AAW85263.1"/>
    <property type="molecule type" value="Genomic_DNA"/>
</dbReference>
<dbReference type="RefSeq" id="WP_005418202.1">
    <property type="nucleotide sequence ID" value="NZ_CAWLES010000001.1"/>
</dbReference>
<dbReference type="RefSeq" id="YP_204151.1">
    <property type="nucleotide sequence ID" value="NC_006840.2"/>
</dbReference>
<dbReference type="SMR" id="Q5E6T3"/>
<dbReference type="STRING" id="312309.VF_0768"/>
<dbReference type="EnsemblBacteria" id="AAW85263">
    <property type="protein sequence ID" value="AAW85263"/>
    <property type="gene ID" value="VF_0768"/>
</dbReference>
<dbReference type="GeneID" id="54163435"/>
<dbReference type="KEGG" id="vfi:VF_0768"/>
<dbReference type="PATRIC" id="fig|312309.11.peg.760"/>
<dbReference type="eggNOG" id="COG0216">
    <property type="taxonomic scope" value="Bacteria"/>
</dbReference>
<dbReference type="HOGENOM" id="CLU_036856_0_1_6"/>
<dbReference type="OrthoDB" id="9806673at2"/>
<dbReference type="Proteomes" id="UP000000537">
    <property type="component" value="Chromosome I"/>
</dbReference>
<dbReference type="GO" id="GO:0005737">
    <property type="term" value="C:cytoplasm"/>
    <property type="evidence" value="ECO:0007669"/>
    <property type="project" value="UniProtKB-SubCell"/>
</dbReference>
<dbReference type="GO" id="GO:0016149">
    <property type="term" value="F:translation release factor activity, codon specific"/>
    <property type="evidence" value="ECO:0007669"/>
    <property type="project" value="UniProtKB-UniRule"/>
</dbReference>
<dbReference type="FunFam" id="3.30.160.20:FF:000004">
    <property type="entry name" value="Peptide chain release factor 1"/>
    <property type="match status" value="1"/>
</dbReference>
<dbReference type="FunFam" id="3.30.70.1660:FF:000002">
    <property type="entry name" value="Peptide chain release factor 1"/>
    <property type="match status" value="1"/>
</dbReference>
<dbReference type="FunFam" id="3.30.70.1660:FF:000004">
    <property type="entry name" value="Peptide chain release factor 1"/>
    <property type="match status" value="1"/>
</dbReference>
<dbReference type="Gene3D" id="3.30.160.20">
    <property type="match status" value="1"/>
</dbReference>
<dbReference type="Gene3D" id="3.30.70.1660">
    <property type="match status" value="1"/>
</dbReference>
<dbReference type="Gene3D" id="6.10.140.1950">
    <property type="match status" value="1"/>
</dbReference>
<dbReference type="HAMAP" id="MF_00093">
    <property type="entry name" value="Rel_fac_1"/>
    <property type="match status" value="1"/>
</dbReference>
<dbReference type="InterPro" id="IPR005139">
    <property type="entry name" value="PCRF"/>
</dbReference>
<dbReference type="InterPro" id="IPR000352">
    <property type="entry name" value="Pep_chain_release_fac_I"/>
</dbReference>
<dbReference type="InterPro" id="IPR045853">
    <property type="entry name" value="Pep_chain_release_fac_I_sf"/>
</dbReference>
<dbReference type="InterPro" id="IPR050057">
    <property type="entry name" value="Prokaryotic/Mito_RF"/>
</dbReference>
<dbReference type="InterPro" id="IPR004373">
    <property type="entry name" value="RF-1"/>
</dbReference>
<dbReference type="NCBIfam" id="TIGR00019">
    <property type="entry name" value="prfA"/>
    <property type="match status" value="1"/>
</dbReference>
<dbReference type="NCBIfam" id="NF001859">
    <property type="entry name" value="PRK00591.1"/>
    <property type="match status" value="1"/>
</dbReference>
<dbReference type="PANTHER" id="PTHR43804">
    <property type="entry name" value="LD18447P"/>
    <property type="match status" value="1"/>
</dbReference>
<dbReference type="PANTHER" id="PTHR43804:SF7">
    <property type="entry name" value="LD18447P"/>
    <property type="match status" value="1"/>
</dbReference>
<dbReference type="Pfam" id="PF03462">
    <property type="entry name" value="PCRF"/>
    <property type="match status" value="1"/>
</dbReference>
<dbReference type="Pfam" id="PF00472">
    <property type="entry name" value="RF-1"/>
    <property type="match status" value="1"/>
</dbReference>
<dbReference type="SMART" id="SM00937">
    <property type="entry name" value="PCRF"/>
    <property type="match status" value="1"/>
</dbReference>
<dbReference type="SUPFAM" id="SSF75620">
    <property type="entry name" value="Release factor"/>
    <property type="match status" value="1"/>
</dbReference>
<dbReference type="PROSITE" id="PS00745">
    <property type="entry name" value="RF_PROK_I"/>
    <property type="match status" value="1"/>
</dbReference>
<gene>
    <name evidence="1" type="primary">prfA</name>
    <name type="ordered locus">VF_0768</name>
</gene>
<sequence>MKASIRVKLETLVERYEEVQHLLGDPDVIGDQNKFRALSREYSQLEEVTQCFQAYEQAQEDLVAAQEMAQEDDEEMREMAQEEIKDAKEAIERLTDELQVLLLPKDPNDERNCFLEIRAGAGGDEAGIFAGNLFRMYSRFAEKKGWRVEVMSSNEAEHGGYKEMIAKVSGEGAYGVLKFESGGHRVQRVPETESQGRVHTSACTVAVMAEIPEADLPEIKAADLKIDTFRASGAGGQHVNTTDSAIRITHLPTGTVVECQDERSQHKNKAKAMSVLAARIIQAEEARRAAAVSDTRRNLLGSGDRSDRIRTYNYPQGRVSDHRINLTVYRLNEVMEGDLGCLIEPVVLEYQADQLAALAEQN</sequence>
<keyword id="KW-0963">Cytoplasm</keyword>
<keyword id="KW-0488">Methylation</keyword>
<keyword id="KW-0648">Protein biosynthesis</keyword>
<keyword id="KW-1185">Reference proteome</keyword>
<feature type="chain" id="PRO_0000263388" description="Peptide chain release factor 1">
    <location>
        <begin position="1"/>
        <end position="362"/>
    </location>
</feature>
<feature type="modified residue" description="N5-methylglutamine" evidence="1">
    <location>
        <position position="237"/>
    </location>
</feature>
<name>RF1_ALIF1</name>
<accession>Q5E6T3</accession>
<reference key="1">
    <citation type="journal article" date="2005" name="Proc. Natl. Acad. Sci. U.S.A.">
        <title>Complete genome sequence of Vibrio fischeri: a symbiotic bacterium with pathogenic congeners.</title>
        <authorList>
            <person name="Ruby E.G."/>
            <person name="Urbanowski M."/>
            <person name="Campbell J."/>
            <person name="Dunn A."/>
            <person name="Faini M."/>
            <person name="Gunsalus R."/>
            <person name="Lostroh P."/>
            <person name="Lupp C."/>
            <person name="McCann J."/>
            <person name="Millikan D."/>
            <person name="Schaefer A."/>
            <person name="Stabb E."/>
            <person name="Stevens A."/>
            <person name="Visick K."/>
            <person name="Whistler C."/>
            <person name="Greenberg E.P."/>
        </authorList>
    </citation>
    <scope>NUCLEOTIDE SEQUENCE [LARGE SCALE GENOMIC DNA]</scope>
    <source>
        <strain>ATCC 700601 / ES114</strain>
    </source>
</reference>
<organism>
    <name type="scientific">Aliivibrio fischeri (strain ATCC 700601 / ES114)</name>
    <name type="common">Vibrio fischeri</name>
    <dbReference type="NCBI Taxonomy" id="312309"/>
    <lineage>
        <taxon>Bacteria</taxon>
        <taxon>Pseudomonadati</taxon>
        <taxon>Pseudomonadota</taxon>
        <taxon>Gammaproteobacteria</taxon>
        <taxon>Vibrionales</taxon>
        <taxon>Vibrionaceae</taxon>
        <taxon>Aliivibrio</taxon>
    </lineage>
</organism>